<protein>
    <recommendedName>
        <fullName>Endoribonuclease MazF</fullName>
        <ecNumber>3.1.-.-</ecNumber>
    </recommendedName>
    <alternativeName>
        <fullName>Toxin MazF</fullName>
    </alternativeName>
    <alternativeName>
        <fullName>mRNA interferase MazF</fullName>
    </alternativeName>
</protein>
<reference key="1">
    <citation type="journal article" date="2002" name="Lancet">
        <title>Genome and virulence determinants of high virulence community-acquired MRSA.</title>
        <authorList>
            <person name="Baba T."/>
            <person name="Takeuchi F."/>
            <person name="Kuroda M."/>
            <person name="Yuzawa H."/>
            <person name="Aoki K."/>
            <person name="Oguchi A."/>
            <person name="Nagai Y."/>
            <person name="Iwama N."/>
            <person name="Asano K."/>
            <person name="Naimi T."/>
            <person name="Kuroda H."/>
            <person name="Cui L."/>
            <person name="Yamamoto K."/>
            <person name="Hiramatsu K."/>
        </authorList>
    </citation>
    <scope>NUCLEOTIDE SEQUENCE [LARGE SCALE GENOMIC DNA]</scope>
    <source>
        <strain>MW2</strain>
    </source>
</reference>
<evidence type="ECO:0000250" key="1">
    <source>
        <dbReference type="UniProtKB" id="A6QIR4"/>
    </source>
</evidence>
<evidence type="ECO:0000305" key="2"/>
<comment type="function">
    <text evidence="1">Toxic component of a type II toxin-antitoxin (TA) system. Ribosome-independent, sequence-specific endoribonuclease that cleaves mRNA, thus inhibiting protein synthesis and inducing bacterial stasis. It cuts between the first and nucleotides of 5'-UACAU-3' in single-stranded RNA. Neutralized by coexpression with cognate antitoxin MazE.</text>
</comment>
<comment type="subunit">
    <text evidence="1">Homodimer. Forms a complex with MazE which is no longer active as an endoribonuclease.</text>
</comment>
<comment type="similarity">
    <text evidence="2">Belongs to the PemK/MazF family.</text>
</comment>
<accession>Q7A0D7</accession>
<keyword id="KW-0255">Endonuclease</keyword>
<keyword id="KW-0378">Hydrolase</keyword>
<keyword id="KW-0540">Nuclease</keyword>
<keyword id="KW-0694">RNA-binding</keyword>
<keyword id="KW-1277">Toxin-antitoxin system</keyword>
<gene>
    <name type="primary">mazF</name>
    <name type="ordered locus">MW1992</name>
</gene>
<proteinExistence type="inferred from homology"/>
<dbReference type="EC" id="3.1.-.-"/>
<dbReference type="EMBL" id="BA000033">
    <property type="protein sequence ID" value="BAB95857.1"/>
    <property type="molecule type" value="Genomic_DNA"/>
</dbReference>
<dbReference type="RefSeq" id="WP_000621175.1">
    <property type="nucleotide sequence ID" value="NC_003923.1"/>
</dbReference>
<dbReference type="SMR" id="Q7A0D7"/>
<dbReference type="KEGG" id="sam:MW1992"/>
<dbReference type="HOGENOM" id="CLU_121823_1_0_9"/>
<dbReference type="GO" id="GO:0003677">
    <property type="term" value="F:DNA binding"/>
    <property type="evidence" value="ECO:0007669"/>
    <property type="project" value="InterPro"/>
</dbReference>
<dbReference type="GO" id="GO:0003723">
    <property type="term" value="F:RNA binding"/>
    <property type="evidence" value="ECO:0007669"/>
    <property type="project" value="UniProtKB-KW"/>
</dbReference>
<dbReference type="GO" id="GO:0004521">
    <property type="term" value="F:RNA endonuclease activity"/>
    <property type="evidence" value="ECO:0007669"/>
    <property type="project" value="TreeGrafter"/>
</dbReference>
<dbReference type="GO" id="GO:0006402">
    <property type="term" value="P:mRNA catabolic process"/>
    <property type="evidence" value="ECO:0007669"/>
    <property type="project" value="TreeGrafter"/>
</dbReference>
<dbReference type="GO" id="GO:0016075">
    <property type="term" value="P:rRNA catabolic process"/>
    <property type="evidence" value="ECO:0007669"/>
    <property type="project" value="TreeGrafter"/>
</dbReference>
<dbReference type="Gene3D" id="2.30.30.110">
    <property type="match status" value="1"/>
</dbReference>
<dbReference type="InterPro" id="IPR003477">
    <property type="entry name" value="PemK-like"/>
</dbReference>
<dbReference type="InterPro" id="IPR011067">
    <property type="entry name" value="Plasmid_toxin/cell-grow_inhib"/>
</dbReference>
<dbReference type="PANTHER" id="PTHR33988:SF2">
    <property type="entry name" value="ENDORIBONUCLEASE MAZF"/>
    <property type="match status" value="1"/>
</dbReference>
<dbReference type="PANTHER" id="PTHR33988">
    <property type="entry name" value="ENDORIBONUCLEASE MAZF-RELATED"/>
    <property type="match status" value="1"/>
</dbReference>
<dbReference type="Pfam" id="PF02452">
    <property type="entry name" value="PemK_toxin"/>
    <property type="match status" value="1"/>
</dbReference>
<dbReference type="PIRSF" id="PIRSF033490">
    <property type="entry name" value="MazF"/>
    <property type="match status" value="1"/>
</dbReference>
<dbReference type="SUPFAM" id="SSF50118">
    <property type="entry name" value="Cell growth inhibitor/plasmid maintenance toxic component"/>
    <property type="match status" value="1"/>
</dbReference>
<feature type="chain" id="PRO_0000330700" description="Endoribonuclease MazF">
    <location>
        <begin position="1"/>
        <end position="120"/>
    </location>
</feature>
<sequence>MIRRGDVYLADLSPVQGSEQGGVRPVVIIQNDTGNKYSPTVIVAAITGRINKAKIPTHVEIEKKKYKLDKDSVILLEQIRTLDKKRLKEKLTYLSDDKMKEVDNALMISLGLNAVAHQKN</sequence>
<organism>
    <name type="scientific">Staphylococcus aureus (strain MW2)</name>
    <dbReference type="NCBI Taxonomy" id="196620"/>
    <lineage>
        <taxon>Bacteria</taxon>
        <taxon>Bacillati</taxon>
        <taxon>Bacillota</taxon>
        <taxon>Bacilli</taxon>
        <taxon>Bacillales</taxon>
        <taxon>Staphylococcaceae</taxon>
        <taxon>Staphylococcus</taxon>
    </lineage>
</organism>
<name>MAZF_STAAW</name>